<keyword id="KW-0972">Capsule biogenesis/degradation</keyword>
<keyword id="KW-1003">Cell membrane</keyword>
<keyword id="KW-0472">Membrane</keyword>
<keyword id="KW-0614">Plasmid</keyword>
<keyword id="KW-1185">Reference proteome</keyword>
<keyword id="KW-0812">Transmembrane</keyword>
<keyword id="KW-1133">Transmembrane helix</keyword>
<keyword id="KW-0843">Virulence</keyword>
<comment type="function">
    <text>Essential for the synthesis of the polyglutamate capsule of B.anthracis which is one of the principal virulence factors during anthrax infection. May form a polyglutamyl synthetase complex together with proteins CapA and CapC.</text>
</comment>
<comment type="pathway">
    <text>Capsule biogenesis; capsule polysaccharide biosynthesis.</text>
</comment>
<comment type="subcellular location">
    <subcellularLocation>
        <location>Cell membrane</location>
        <topology>Single-pass membrane protein</topology>
    </subcellularLocation>
</comment>
<comment type="induction">
    <text evidence="2">Capsule synthesis is transcriptionally regulated by AtxA, AcpA and AcpB.</text>
</comment>
<dbReference type="EMBL" id="AF188935">
    <property type="protein sequence ID" value="AAF13663.1"/>
    <property type="molecule type" value="Genomic_DNA"/>
</dbReference>
<dbReference type="EMBL" id="AE011191">
    <property type="protein sequence ID" value="AAM26222.1"/>
    <property type="molecule type" value="Genomic_DNA"/>
</dbReference>
<dbReference type="EMBL" id="AE017335">
    <property type="protein sequence ID" value="AAT28996.2"/>
    <property type="molecule type" value="Genomic_DNA"/>
</dbReference>
<dbReference type="EMBL" id="M24150">
    <property type="protein sequence ID" value="AAA22286.1"/>
    <property type="molecule type" value="Genomic_DNA"/>
</dbReference>
<dbReference type="PIR" id="A30091">
    <property type="entry name" value="A30091"/>
</dbReference>
<dbReference type="RefSeq" id="NP_053213.1">
    <property type="nucleotide sequence ID" value="NC_002146.1"/>
</dbReference>
<dbReference type="RefSeq" id="WP_003159943.1">
    <property type="nucleotide sequence ID" value="NZ_VTZL01000009.1"/>
</dbReference>
<dbReference type="SMR" id="P19580"/>
<dbReference type="GeneID" id="45025367"/>
<dbReference type="KEGG" id="bar:GBAA_pXO2_0066"/>
<dbReference type="HOGENOM" id="CLU_041144_0_0_9"/>
<dbReference type="OMA" id="NECMAVN"/>
<dbReference type="BioCyc" id="MetaCyc:GBAA_PXO2_0066-MONOMER"/>
<dbReference type="UniPathway" id="UPA00934"/>
<dbReference type="Proteomes" id="UP000000594">
    <property type="component" value="Plasmid pXO2"/>
</dbReference>
<dbReference type="GO" id="GO:0005886">
    <property type="term" value="C:plasma membrane"/>
    <property type="evidence" value="ECO:0007669"/>
    <property type="project" value="UniProtKB-SubCell"/>
</dbReference>
<dbReference type="GO" id="GO:0016881">
    <property type="term" value="F:acid-amino acid ligase activity"/>
    <property type="evidence" value="ECO:0007669"/>
    <property type="project" value="InterPro"/>
</dbReference>
<dbReference type="GO" id="GO:0005524">
    <property type="term" value="F:ATP binding"/>
    <property type="evidence" value="ECO:0007669"/>
    <property type="project" value="InterPro"/>
</dbReference>
<dbReference type="GO" id="GO:0045227">
    <property type="term" value="P:capsule polysaccharide biosynthetic process"/>
    <property type="evidence" value="ECO:0007669"/>
    <property type="project" value="UniProtKB-UniPathway"/>
</dbReference>
<dbReference type="Gene3D" id="3.40.1190.10">
    <property type="entry name" value="Mur-like, catalytic domain"/>
    <property type="match status" value="1"/>
</dbReference>
<dbReference type="InterPro" id="IPR008337">
    <property type="entry name" value="Capsule_biosynth_CapB"/>
</dbReference>
<dbReference type="InterPro" id="IPR036565">
    <property type="entry name" value="Mur-like_cat_sf"/>
</dbReference>
<dbReference type="InterPro" id="IPR013221">
    <property type="entry name" value="Mur_ligase_cen"/>
</dbReference>
<dbReference type="InterPro" id="IPR050061">
    <property type="entry name" value="MurCDEF_pg_biosynth"/>
</dbReference>
<dbReference type="NCBIfam" id="TIGR04012">
    <property type="entry name" value="poly_gGlu_PgsB"/>
    <property type="match status" value="1"/>
</dbReference>
<dbReference type="PANTHER" id="PTHR43445:SF1">
    <property type="entry name" value="PGA SYNTHASE CAPB"/>
    <property type="match status" value="1"/>
</dbReference>
<dbReference type="PANTHER" id="PTHR43445">
    <property type="entry name" value="UDP-N-ACETYLMURAMATE--L-ALANINE LIGASE-RELATED"/>
    <property type="match status" value="1"/>
</dbReference>
<dbReference type="Pfam" id="PF08245">
    <property type="entry name" value="Mur_ligase_M"/>
    <property type="match status" value="1"/>
</dbReference>
<dbReference type="PRINTS" id="PR01758">
    <property type="entry name" value="CAPSULEPROTB"/>
</dbReference>
<dbReference type="SUPFAM" id="SSF53623">
    <property type="entry name" value="MurD-like peptide ligases, catalytic domain"/>
    <property type="match status" value="1"/>
</dbReference>
<gene>
    <name type="primary">capB</name>
    <name type="ordered locus">pXO2-58</name>
    <name type="ordered locus">BXB0066</name>
    <name type="ordered locus">GBAA_pXO2_0066</name>
</gene>
<geneLocation type="plasmid">
    <name>pXO2</name>
</geneLocation>
<geneLocation type="plasmid">
    <name>pTE702</name>
</geneLocation>
<feature type="chain" id="PRO_0000089309" description="Capsule biosynthesis protein CapB">
    <location>
        <begin position="1"/>
        <end position="464"/>
    </location>
</feature>
<feature type="transmembrane region" description="Helical" evidence="1">
    <location>
        <begin position="65"/>
        <end position="85"/>
    </location>
</feature>
<reference key="1">
    <citation type="journal article" date="1999" name="J. Appl. Microbiol.">
        <title>Sequence, assembly and analysis of pXO1 and pXO2.</title>
        <authorList>
            <person name="Okinaka R.T."/>
            <person name="Cloud K."/>
            <person name="Hampton O."/>
            <person name="Hoffmaster A."/>
            <person name="Hill K.K."/>
            <person name="Keim P."/>
            <person name="Koehler T."/>
            <person name="Lamke G."/>
            <person name="Kumano S."/>
            <person name="Manter D."/>
            <person name="Martinez Y."/>
            <person name="Ricke D."/>
            <person name="Svensson R."/>
            <person name="Jackson P.J."/>
        </authorList>
    </citation>
    <scope>NUCLEOTIDE SEQUENCE [GENOMIC DNA]</scope>
    <source>
        <strain>Pasteur</strain>
        <plasmid>pXO2</plasmid>
    </source>
</reference>
<reference key="2">
    <citation type="journal article" date="2002" name="Science">
        <title>Comparative genome sequencing for discovery of novel polymorphisms in Bacillus anthracis.</title>
        <authorList>
            <person name="Read T.D."/>
            <person name="Salzberg S.L."/>
            <person name="Pop M."/>
            <person name="Shumway M.F."/>
            <person name="Umayam L."/>
            <person name="Jiang L."/>
            <person name="Holtzapple E."/>
            <person name="Busch J.D."/>
            <person name="Smith K.L."/>
            <person name="Schupp J.M."/>
            <person name="Solomon D."/>
            <person name="Keim P."/>
            <person name="Fraser C.M."/>
        </authorList>
    </citation>
    <scope>NUCLEOTIDE SEQUENCE [GENOMIC DNA]</scope>
    <source>
        <strain>Ames / isolate Florida / A2012</strain>
        <plasmid>pXO2</plasmid>
    </source>
</reference>
<reference key="3">
    <citation type="journal article" date="2009" name="J. Bacteriol.">
        <title>The complete genome sequence of Bacillus anthracis Ames 'Ancestor'.</title>
        <authorList>
            <person name="Ravel J."/>
            <person name="Jiang L."/>
            <person name="Stanley S.T."/>
            <person name="Wilson M.R."/>
            <person name="Decker R.S."/>
            <person name="Read T.D."/>
            <person name="Worsham P."/>
            <person name="Keim P.S."/>
            <person name="Salzberg S.L."/>
            <person name="Fraser-Liggett C.M."/>
            <person name="Rasko D.A."/>
        </authorList>
    </citation>
    <scope>NUCLEOTIDE SEQUENCE [LARGE SCALE GENOMIC DNA]</scope>
    <source>
        <strain>Ames ancestor</strain>
        <plasmid>pXO2</plasmid>
    </source>
</reference>
<reference key="4">
    <citation type="journal article" date="1989" name="J. Bacteriol.">
        <title>Molecular characterization and protein analysis of the cap region, which is essential for encapsulation in Bacillus anthracis.</title>
        <authorList>
            <person name="Makino S."/>
            <person name="Uchida I."/>
            <person name="Terakado N."/>
            <person name="Sasakawa C."/>
            <person name="Yoshikawa M."/>
        </authorList>
    </citation>
    <scope>NUCLEOTIDE SEQUENCE [GENOMIC DNA] OF 68-464</scope>
    <source>
        <plasmid>pTE702</plasmid>
    </source>
</reference>
<reference key="5">
    <citation type="journal article" date="2004" name="J. Bacteriol.">
        <title>atxA controls Bacillus anthracis capsule synthesis via acpA and a newly discovered regulator, acpB.</title>
        <authorList>
            <person name="Drysdale M."/>
            <person name="Bourgogne A."/>
            <person name="Hilsenbeck S.G."/>
            <person name="Koehler T.M."/>
        </authorList>
    </citation>
    <scope>INDUCTION</scope>
    <source>
        <plasmid>pXO2</plasmid>
    </source>
</reference>
<accession>P19580</accession>
<accession>Q9RMX5</accession>
<protein>
    <recommendedName>
        <fullName>Capsule biosynthesis protein CapB</fullName>
    </recommendedName>
</protein>
<organism>
    <name type="scientific">Bacillus anthracis</name>
    <dbReference type="NCBI Taxonomy" id="1392"/>
    <lineage>
        <taxon>Bacteria</taxon>
        <taxon>Bacillati</taxon>
        <taxon>Bacillota</taxon>
        <taxon>Bacilli</taxon>
        <taxon>Bacillales</taxon>
        <taxon>Bacillaceae</taxon>
        <taxon>Bacillus</taxon>
        <taxon>Bacillus cereus group</taxon>
    </lineage>
</organism>
<proteinExistence type="evidence at transcript level"/>
<evidence type="ECO:0000255" key="1"/>
<evidence type="ECO:0000269" key="2">
    <source>
    </source>
</evidence>
<sequence>MKNIKIVRILKHDEAIRIEHRISELYSDEFGVVYAGNHLIFNWYQRLYLSRNILISKKSKSRKGLIQMIFIIGICTVFLIIYGIWEQRCHQKRLNSIPIRVNINGIRGKSTVTRLITGVVQEAKYKTVGKTTGTSARMIYWFTDEEQPIKRRKEGPNIGEQRRVVKEAADLEAEALICECMAVQPDYQIIFQNKMIQANVGVIVNVLEDHMDVMGPTLDEVAEAFTATIPYNGHLVTIESEYLDYFKEVAEERNTKVIVADNSRISEEFLRKFDYMVFPDNASLALAVAEALGIDEETAFRGMLNAHPDPGAMRITRFADQSKPAFFVNGFAANDPSSTLRIWERVDDFGYSNLAPIVIMNCRPDRVDRTEQFARDVLPYIKAEIVIAIGETTAPITSAFEKGDIPTQEYWNLEGWSTSEIMSRMRPYLKNRIVYGVGNIHGAAEPLIDMIMEEQIGKKQAKVI</sequence>
<name>CAPB_BACAN</name>